<accession>O48556</accession>
<dbReference type="EC" id="3.6.1.1"/>
<dbReference type="EMBL" id="AF034947">
    <property type="protein sequence ID" value="AAB88618.1"/>
    <property type="molecule type" value="mRNA"/>
</dbReference>
<dbReference type="PIR" id="T01370">
    <property type="entry name" value="T01370"/>
</dbReference>
<dbReference type="RefSeq" id="NP_001104889.1">
    <property type="nucleotide sequence ID" value="NM_001111419.1"/>
</dbReference>
<dbReference type="RefSeq" id="XP_008668607.1">
    <property type="nucleotide sequence ID" value="XM_008670385.1"/>
</dbReference>
<dbReference type="SMR" id="O48556"/>
<dbReference type="FunCoup" id="O48556">
    <property type="interactions" value="179"/>
</dbReference>
<dbReference type="STRING" id="4577.O48556"/>
<dbReference type="PaxDb" id="4577-GRMZM2G061928_P01"/>
<dbReference type="EnsemblPlants" id="Zm00001eb076120_T001">
    <property type="protein sequence ID" value="Zm00001eb076120_P001"/>
    <property type="gene ID" value="Zm00001eb076120"/>
</dbReference>
<dbReference type="EnsemblPlants" id="Zm00001eb076120_T003">
    <property type="protein sequence ID" value="Zm00001eb076120_P003"/>
    <property type="gene ID" value="Zm00001eb076120"/>
</dbReference>
<dbReference type="EnsemblPlants" id="Zm00001eb076120_T004">
    <property type="protein sequence ID" value="Zm00001eb076120_P004"/>
    <property type="gene ID" value="Zm00001eb076120"/>
</dbReference>
<dbReference type="EnsemblPlants" id="Zm00001eb076120_T005">
    <property type="protein sequence ID" value="Zm00001eb076120_P005"/>
    <property type="gene ID" value="Zm00001eb076120"/>
</dbReference>
<dbReference type="EnsemblPlants" id="Zm00001eb076120_T006">
    <property type="protein sequence ID" value="Zm00001eb076120_P006"/>
    <property type="gene ID" value="Zm00001eb076120"/>
</dbReference>
<dbReference type="GeneID" id="541666"/>
<dbReference type="Gramene" id="Zm00001eb076120_T001">
    <property type="protein sequence ID" value="Zm00001eb076120_P001"/>
    <property type="gene ID" value="Zm00001eb076120"/>
</dbReference>
<dbReference type="Gramene" id="Zm00001eb076120_T003">
    <property type="protein sequence ID" value="Zm00001eb076120_P003"/>
    <property type="gene ID" value="Zm00001eb076120"/>
</dbReference>
<dbReference type="Gramene" id="Zm00001eb076120_T004">
    <property type="protein sequence ID" value="Zm00001eb076120_P004"/>
    <property type="gene ID" value="Zm00001eb076120"/>
</dbReference>
<dbReference type="Gramene" id="Zm00001eb076120_T005">
    <property type="protein sequence ID" value="Zm00001eb076120_P005"/>
    <property type="gene ID" value="Zm00001eb076120"/>
</dbReference>
<dbReference type="Gramene" id="Zm00001eb076120_T006">
    <property type="protein sequence ID" value="Zm00001eb076120_P006"/>
    <property type="gene ID" value="Zm00001eb076120"/>
</dbReference>
<dbReference type="KEGG" id="zma:541666"/>
<dbReference type="eggNOG" id="KOG1626">
    <property type="taxonomic scope" value="Eukaryota"/>
</dbReference>
<dbReference type="InParanoid" id="O48556"/>
<dbReference type="OrthoDB" id="1608002at2759"/>
<dbReference type="Proteomes" id="UP000007305">
    <property type="component" value="Chromosome 2"/>
</dbReference>
<dbReference type="ExpressionAtlas" id="O48556">
    <property type="expression patterns" value="baseline and differential"/>
</dbReference>
<dbReference type="GO" id="GO:0005829">
    <property type="term" value="C:cytosol"/>
    <property type="evidence" value="ECO:0000318"/>
    <property type="project" value="GO_Central"/>
</dbReference>
<dbReference type="GO" id="GO:0004427">
    <property type="term" value="F:inorganic diphosphate phosphatase activity"/>
    <property type="evidence" value="ECO:0000318"/>
    <property type="project" value="GO_Central"/>
</dbReference>
<dbReference type="GO" id="GO:0000287">
    <property type="term" value="F:magnesium ion binding"/>
    <property type="evidence" value="ECO:0007669"/>
    <property type="project" value="InterPro"/>
</dbReference>
<dbReference type="GO" id="GO:0006796">
    <property type="term" value="P:phosphate-containing compound metabolic process"/>
    <property type="evidence" value="ECO:0000318"/>
    <property type="project" value="GO_Central"/>
</dbReference>
<dbReference type="CDD" id="cd00412">
    <property type="entry name" value="pyrophosphatase"/>
    <property type="match status" value="1"/>
</dbReference>
<dbReference type="FunFam" id="3.90.80.10:FF:000002">
    <property type="entry name" value="Soluble inorganic pyrophosphatase 4"/>
    <property type="match status" value="1"/>
</dbReference>
<dbReference type="Gene3D" id="3.90.80.10">
    <property type="entry name" value="Inorganic pyrophosphatase"/>
    <property type="match status" value="1"/>
</dbReference>
<dbReference type="HAMAP" id="MF_00209">
    <property type="entry name" value="Inorganic_PPase"/>
    <property type="match status" value="1"/>
</dbReference>
<dbReference type="InterPro" id="IPR008162">
    <property type="entry name" value="Pyrophosphatase"/>
</dbReference>
<dbReference type="InterPro" id="IPR036649">
    <property type="entry name" value="Pyrophosphatase_sf"/>
</dbReference>
<dbReference type="PANTHER" id="PTHR10286">
    <property type="entry name" value="INORGANIC PYROPHOSPHATASE"/>
    <property type="match status" value="1"/>
</dbReference>
<dbReference type="Pfam" id="PF00719">
    <property type="entry name" value="Pyrophosphatase"/>
    <property type="match status" value="1"/>
</dbReference>
<dbReference type="SUPFAM" id="SSF50324">
    <property type="entry name" value="Inorganic pyrophosphatase"/>
    <property type="match status" value="1"/>
</dbReference>
<dbReference type="PROSITE" id="PS00387">
    <property type="entry name" value="PPASE"/>
    <property type="match status" value="1"/>
</dbReference>
<name>IPYR_MAIZE</name>
<gene>
    <name type="primary">IPP</name>
</gene>
<feature type="chain" id="PRO_0000137576" description="Soluble inorganic pyrophosphatase">
    <location>
        <begin position="1"/>
        <end position="214"/>
    </location>
</feature>
<feature type="region of interest" description="Disordered" evidence="3">
    <location>
        <begin position="1"/>
        <end position="20"/>
    </location>
</feature>
<feature type="binding site" evidence="2">
    <location>
        <position position="64"/>
    </location>
    <ligand>
        <name>substrate</name>
    </ligand>
</feature>
<feature type="binding site" evidence="2">
    <location>
        <position position="78"/>
    </location>
    <ligand>
        <name>substrate</name>
    </ligand>
</feature>
<feature type="binding site" evidence="2">
    <location>
        <position position="90"/>
    </location>
    <ligand>
        <name>substrate</name>
    </ligand>
</feature>
<feature type="binding site" evidence="1">
    <location>
        <position position="100"/>
    </location>
    <ligand>
        <name>Mg(2+)</name>
        <dbReference type="ChEBI" id="CHEBI:18420"/>
        <label>1</label>
    </ligand>
</feature>
<feature type="binding site" evidence="1">
    <location>
        <position position="105"/>
    </location>
    <ligand>
        <name>Mg(2+)</name>
        <dbReference type="ChEBI" id="CHEBI:18420"/>
        <label>1</label>
    </ligand>
</feature>
<feature type="binding site" evidence="1">
    <location>
        <position position="105"/>
    </location>
    <ligand>
        <name>Mg(2+)</name>
        <dbReference type="ChEBI" id="CHEBI:18420"/>
        <label>2</label>
    </ligand>
</feature>
<feature type="binding site" evidence="1">
    <location>
        <position position="137"/>
    </location>
    <ligand>
        <name>Mg(2+)</name>
        <dbReference type="ChEBI" id="CHEBI:18420"/>
        <label>1</label>
    </ligand>
</feature>
<feature type="binding site" evidence="2">
    <location>
        <position position="174"/>
    </location>
    <ligand>
        <name>substrate</name>
    </ligand>
</feature>
<proteinExistence type="evidence at transcript level"/>
<sequence length="214" mass="24370">MSEEDKTAASAEQPKRAPKLNERILSSLSRRSVAAHPWHDLEIGPDAPAVFNVVVEITKGSKVKYELDKKTGLIKVDRVLYSSVVYPHNYGFVPRTLCEDNDPMDVLVLMQEPVVPGSFLRARAIGLMPMIDQGEKDDKIIAVCADDPEYRHYNDISELSPHRLQEIKRFFEDYKKNENKEVAVDAFLPATTAREAIQYSMDLYAQYILQSLRQ</sequence>
<organism>
    <name type="scientific">Zea mays</name>
    <name type="common">Maize</name>
    <dbReference type="NCBI Taxonomy" id="4577"/>
    <lineage>
        <taxon>Eukaryota</taxon>
        <taxon>Viridiplantae</taxon>
        <taxon>Streptophyta</taxon>
        <taxon>Embryophyta</taxon>
        <taxon>Tracheophyta</taxon>
        <taxon>Spermatophyta</taxon>
        <taxon>Magnoliopsida</taxon>
        <taxon>Liliopsida</taxon>
        <taxon>Poales</taxon>
        <taxon>Poaceae</taxon>
        <taxon>PACMAD clade</taxon>
        <taxon>Panicoideae</taxon>
        <taxon>Andropogonodae</taxon>
        <taxon>Andropogoneae</taxon>
        <taxon>Tripsacinae</taxon>
        <taxon>Zea</taxon>
    </lineage>
</organism>
<keyword id="KW-0963">Cytoplasm</keyword>
<keyword id="KW-0378">Hydrolase</keyword>
<keyword id="KW-0460">Magnesium</keyword>
<keyword id="KW-0479">Metal-binding</keyword>
<keyword id="KW-1185">Reference proteome</keyword>
<evidence type="ECO:0000250" key="1"/>
<evidence type="ECO:0000250" key="2">
    <source>
        <dbReference type="UniProtKB" id="P9WI55"/>
    </source>
</evidence>
<evidence type="ECO:0000256" key="3">
    <source>
        <dbReference type="SAM" id="MobiDB-lite"/>
    </source>
</evidence>
<evidence type="ECO:0000305" key="4"/>
<reference key="1">
    <citation type="submission" date="1997-11" db="EMBL/GenBank/DDBJ databases">
        <authorList>
            <person name="Kadambi S.N."/>
            <person name="Baysdorfer C."/>
        </authorList>
    </citation>
    <scope>NUCLEOTIDE SEQUENCE [MRNA]</scope>
    <source>
        <strain>cv. B73</strain>
    </source>
</reference>
<comment type="catalytic activity">
    <reaction>
        <text>diphosphate + H2O = 2 phosphate + H(+)</text>
        <dbReference type="Rhea" id="RHEA:24576"/>
        <dbReference type="ChEBI" id="CHEBI:15377"/>
        <dbReference type="ChEBI" id="CHEBI:15378"/>
        <dbReference type="ChEBI" id="CHEBI:33019"/>
        <dbReference type="ChEBI" id="CHEBI:43474"/>
        <dbReference type="EC" id="3.6.1.1"/>
    </reaction>
</comment>
<comment type="cofactor">
    <cofactor evidence="1">
        <name>Mg(2+)</name>
        <dbReference type="ChEBI" id="CHEBI:18420"/>
    </cofactor>
</comment>
<comment type="subcellular location">
    <subcellularLocation>
        <location>Cytoplasm</location>
    </subcellularLocation>
</comment>
<comment type="similarity">
    <text evidence="4">Belongs to the PPase family.</text>
</comment>
<protein>
    <recommendedName>
        <fullName>Soluble inorganic pyrophosphatase</fullName>
        <ecNumber>3.6.1.1</ecNumber>
    </recommendedName>
    <alternativeName>
        <fullName>Pyrophosphate phospho-hydrolase</fullName>
        <shortName>PPase</shortName>
    </alternativeName>
</protein>